<keyword id="KW-0067">ATP-binding</keyword>
<keyword id="KW-0963">Cytoplasm</keyword>
<keyword id="KW-0238">DNA-binding</keyword>
<keyword id="KW-0413">Isomerase</keyword>
<keyword id="KW-0460">Magnesium</keyword>
<keyword id="KW-0479">Metal-binding</keyword>
<keyword id="KW-0547">Nucleotide-binding</keyword>
<keyword id="KW-1185">Reference proteome</keyword>
<keyword id="KW-0799">Topoisomerase</keyword>
<protein>
    <recommendedName>
        <fullName>DNA gyrase subunit B</fullName>
        <ecNumber evidence="1">5.6.2.2</ecNumber>
    </recommendedName>
    <component>
        <recommendedName>
            <fullName>Ssp GyrB intein</fullName>
        </recommendedName>
    </component>
</protein>
<proteinExistence type="inferred from homology"/>
<organism>
    <name type="scientific">Synechocystis sp. (strain ATCC 27184 / PCC 6803 / Kazusa)</name>
    <dbReference type="NCBI Taxonomy" id="1111708"/>
    <lineage>
        <taxon>Bacteria</taxon>
        <taxon>Bacillati</taxon>
        <taxon>Cyanobacteriota</taxon>
        <taxon>Cyanophyceae</taxon>
        <taxon>Synechococcales</taxon>
        <taxon>Merismopediaceae</taxon>
        <taxon>Synechocystis</taxon>
    </lineage>
</organism>
<accession>P77966</accession>
<evidence type="ECO:0000250" key="1">
    <source>
        <dbReference type="UniProtKB" id="P0AES6"/>
    </source>
</evidence>
<evidence type="ECO:0000255" key="2">
    <source>
        <dbReference type="PROSITE-ProRule" id="PRU00995"/>
    </source>
</evidence>
<evidence type="ECO:0000305" key="3"/>
<feature type="chain" id="PRO_0000435539" description="DNA gyrase subunit B">
    <location>
        <begin position="1"/>
        <end position="1078"/>
    </location>
</feature>
<feature type="chain" id="PRO_0000034816" description="DNA gyrase subunit B, 1st part">
    <location>
        <begin position="1"/>
        <end position="436"/>
    </location>
</feature>
<feature type="chain" id="PRO_0000034817" description="Ssp GyrB intein">
    <location>
        <begin position="437"/>
        <end position="871"/>
    </location>
</feature>
<feature type="chain" id="PRO_0000034818" description="DNA gyrase subunit B, 2nd part">
    <location>
        <begin position="872"/>
        <end position="1078"/>
    </location>
</feature>
<feature type="domain" description="Toprim" evidence="2">
    <location>
        <begin position="889"/>
        <end position="974"/>
    </location>
</feature>
<feature type="binding site" evidence="2">
    <location>
        <position position="895"/>
    </location>
    <ligand>
        <name>Mg(2+)</name>
        <dbReference type="ChEBI" id="CHEBI:18420"/>
        <label>1</label>
        <note>catalytic</note>
    </ligand>
</feature>
<feature type="binding site" evidence="2">
    <location>
        <position position="939"/>
    </location>
    <ligand>
        <name>Mg(2+)</name>
        <dbReference type="ChEBI" id="CHEBI:18420"/>
        <label>1</label>
        <note>catalytic</note>
    </ligand>
</feature>
<feature type="binding site" evidence="2">
    <location>
        <position position="939"/>
    </location>
    <ligand>
        <name>Mg(2+)</name>
        <dbReference type="ChEBI" id="CHEBI:18420"/>
        <label>2</label>
    </ligand>
</feature>
<feature type="binding site" evidence="2">
    <location>
        <position position="941"/>
    </location>
    <ligand>
        <name>Mg(2+)</name>
        <dbReference type="ChEBI" id="CHEBI:18420"/>
        <label>2</label>
    </ligand>
</feature>
<name>GYRB_SYNY3</name>
<sequence length="1078" mass="122819">MTMTTTNYGADQIQVLEGLEPVRKRPGMYIGSTGPKGLHHLVYEVVDNAIDEALAGYCTHIEIDINADGSVTVVDNGRGIPTDIHPTTGRSALETVLTVLHAGGKFGGGGYKVSGGLHGVGVSVVNALSEWVEVKVWRQGKEHFQRFERGNPIGTLEATPNEGHSTGTQVSFLPDTQIFKDGIEFDYHTLASRLKELAYLNAGVRITFGDRRADSLKEEQFYYEGGIREYVTYMTTDKTPLHEEIIYTSGEKNDVQVEVALQWCVDAYSDTLLGFANNIRTIDGGTHLEGLKAVLTRTLNSVARKRNKLKDGDSNLGGENIREGLTGVISVKVPDPEFEGQTKTKLGNTEVRGIVDTLVGEALTEFLEFNPGVADAIIEKAVQAFKAAEAARRARELVRRKSVLESSTLPGKLADCSSKDPSESEIFIVEGDSAGGCFSGDTLVALTDGRSVSFEQLVEEEKQGKQNFCYTIRHDGSIGVEKIINARKTKTNAKVIKVTLDNGESIICTPDHKFMLRDGSYKCAMDLTLDDSLMPLHRKISTTEDSGITIDGYEMVWSPRSDSWLFTHLVADWYNRWQGIYIAEEKQHCHHKDFNKRNNNPDNLIRLSPEKHLALHRKHISKTLHRPDVVEKCRRIHQSPEFRRKMSARMQSPETRAILSKQAQAQWQNETYKLTMMESWRSFYDSNEDYRQQNAEQLNRAQQEYWAQAENRTAQAERVRQHFAQNPGLRQQYSENAVKQWNNPELLKWRQKKTKEQWTPEFREKRREALAQTYYRKTLAALKQVEIENGYLDISAYDSYRISTKDKSLLRFDRFCERYFENDENLAREAVLNYNHRIVNIEAVSETIDVYDIEVPHTHNFALASGVFVHNSAKQGRDRRFQAILPLRGKILNIEKTDDAKIYKNTEIQALITALGLGIKGDDFDISSLRYHRVVIMTDADVDGAHIRTLLLTFFYRYQRDLVDQGYIYIACPPLYKLERGKNHFYCYSDRELQEQISQFPPNANYTIQRFKGLGEMMPQQLWDTTMNPESRTMKRVHIEDAAEADRIFTVLMGDRVAPRREFIETYGTKLDLTDLDI</sequence>
<reference key="1">
    <citation type="journal article" date="1996" name="DNA Res.">
        <title>Sequence analysis of the genome of the unicellular cyanobacterium Synechocystis sp. strain PCC6803. II. Sequence determination of the entire genome and assignment of potential protein-coding regions.</title>
        <authorList>
            <person name="Kaneko T."/>
            <person name="Sato S."/>
            <person name="Kotani H."/>
            <person name="Tanaka A."/>
            <person name="Asamizu E."/>
            <person name="Nakamura Y."/>
            <person name="Miyajima N."/>
            <person name="Hirosawa M."/>
            <person name="Sugiura M."/>
            <person name="Sasamoto S."/>
            <person name="Kimura T."/>
            <person name="Hosouchi T."/>
            <person name="Matsuno A."/>
            <person name="Muraki A."/>
            <person name="Nakazaki N."/>
            <person name="Naruo K."/>
            <person name="Okumura S."/>
            <person name="Shimpo S."/>
            <person name="Takeuchi C."/>
            <person name="Wada T."/>
            <person name="Watanabe A."/>
            <person name="Yamada M."/>
            <person name="Yasuda M."/>
            <person name="Tabata S."/>
        </authorList>
    </citation>
    <scope>NUCLEOTIDE SEQUENCE [LARGE SCALE GENOMIC DNA]</scope>
    <source>
        <strain>ATCC 27184 / PCC 6803 / Kazusa</strain>
    </source>
</reference>
<gene>
    <name type="primary">gyrB</name>
    <name type="ordered locus">sll2005</name>
</gene>
<comment type="function">
    <text evidence="1">A type II topoisomerase that negatively supercoils closed circular double-stranded (ds) DNA in an ATP-dependent manner to modulate DNA topology and maintain chromosomes in an underwound state. Negative supercoiling favors strand separation, and DNA replication, transcription, recombination and repair, all of which involve strand separation. Also able to catalyze the interconversion of other topological isomers of dsDNA rings, including catenanes and knotted rings. Type II topoisomerases break and join 2 DNA strands simultaneously in an ATP-dependent manner.</text>
</comment>
<comment type="catalytic activity">
    <reaction evidence="1">
        <text>ATP-dependent breakage, passage and rejoining of double-stranded DNA.</text>
        <dbReference type="EC" id="5.6.2.2"/>
    </reaction>
</comment>
<comment type="cofactor">
    <cofactor evidence="2">
        <name>Mg(2+)</name>
        <dbReference type="ChEBI" id="CHEBI:18420"/>
    </cofactor>
    <text evidence="2">Binds two Mg(2+) per subunit.</text>
</comment>
<comment type="subunit">
    <text evidence="1">Heterotetramer, composed of two GyrA and two GyrB chains. In the heterotetramer, GyrA contains the active site tyrosine that forms a transient covalent intermediate with DNA, while GyrB binds cofactors and catalyzes ATP hydrolysis.</text>
</comment>
<comment type="subcellular location">
    <subcellularLocation>
        <location evidence="1">Cytoplasm</location>
    </subcellularLocation>
</comment>
<comment type="PTM">
    <text evidence="3">This protein undergoes a protein self splicing that involves a post-translational excision of the intervening region (intein) followed by peptide ligation.</text>
</comment>
<comment type="miscellaneous">
    <text evidence="3">Few gyrases are as efficient as E.coli at forming negative supercoils. Not all organisms have 2 type II topoisomerases; in organisms with a single type II topoisomerase this enzyme also has to decatenate newly replicated chromosomes.</text>
</comment>
<comment type="similarity">
    <text evidence="3">Belongs to the type II topoisomerase GyrB family.</text>
</comment>
<dbReference type="EC" id="5.6.2.2" evidence="1"/>
<dbReference type="EMBL" id="BA000022">
    <property type="protein sequence ID" value="BAA17720.1"/>
    <property type="molecule type" value="Genomic_DNA"/>
</dbReference>
<dbReference type="PIR" id="S77162">
    <property type="entry name" value="S77162"/>
</dbReference>
<dbReference type="SMR" id="P77966"/>
<dbReference type="DIP" id="DIP-48809N"/>
<dbReference type="FunCoup" id="P77966">
    <property type="interactions" value="387"/>
</dbReference>
<dbReference type="IntAct" id="P77966">
    <property type="interactions" value="16"/>
</dbReference>
<dbReference type="STRING" id="1148.gene:10498587"/>
<dbReference type="PaxDb" id="1148-1652801"/>
<dbReference type="EnsemblBacteria" id="BAA17720">
    <property type="protein sequence ID" value="BAA17720"/>
    <property type="gene ID" value="BAA17720"/>
</dbReference>
<dbReference type="KEGG" id="syn:sll2005"/>
<dbReference type="eggNOG" id="COG0187">
    <property type="taxonomic scope" value="Bacteria"/>
</dbReference>
<dbReference type="eggNOG" id="COG1372">
    <property type="taxonomic scope" value="Bacteria"/>
</dbReference>
<dbReference type="InParanoid" id="P77966"/>
<dbReference type="PhylomeDB" id="P77966"/>
<dbReference type="Proteomes" id="UP000001425">
    <property type="component" value="Chromosome"/>
</dbReference>
<dbReference type="GO" id="GO:0005694">
    <property type="term" value="C:chromosome"/>
    <property type="evidence" value="ECO:0007669"/>
    <property type="project" value="InterPro"/>
</dbReference>
<dbReference type="GO" id="GO:0005737">
    <property type="term" value="C:cytoplasm"/>
    <property type="evidence" value="ECO:0007669"/>
    <property type="project" value="UniProtKB-SubCell"/>
</dbReference>
<dbReference type="GO" id="GO:0005524">
    <property type="term" value="F:ATP binding"/>
    <property type="evidence" value="ECO:0007669"/>
    <property type="project" value="UniProtKB-KW"/>
</dbReference>
<dbReference type="GO" id="GO:0003677">
    <property type="term" value="F:DNA binding"/>
    <property type="evidence" value="ECO:0007669"/>
    <property type="project" value="UniProtKB-KW"/>
</dbReference>
<dbReference type="GO" id="GO:0034335">
    <property type="term" value="F:DNA negative supercoiling activity"/>
    <property type="evidence" value="ECO:0007669"/>
    <property type="project" value="UniProtKB-ARBA"/>
</dbReference>
<dbReference type="GO" id="GO:0046872">
    <property type="term" value="F:metal ion binding"/>
    <property type="evidence" value="ECO:0007669"/>
    <property type="project" value="UniProtKB-KW"/>
</dbReference>
<dbReference type="GO" id="GO:0006265">
    <property type="term" value="P:DNA topological change"/>
    <property type="evidence" value="ECO:0007669"/>
    <property type="project" value="InterPro"/>
</dbReference>
<dbReference type="GO" id="GO:0016539">
    <property type="term" value="P:intein-mediated protein splicing"/>
    <property type="evidence" value="ECO:0007669"/>
    <property type="project" value="InterPro"/>
</dbReference>
<dbReference type="CDD" id="cd16928">
    <property type="entry name" value="HATPase_GyrB-like"/>
    <property type="match status" value="1"/>
</dbReference>
<dbReference type="CDD" id="cd00081">
    <property type="entry name" value="Hint"/>
    <property type="match status" value="2"/>
</dbReference>
<dbReference type="CDD" id="cd00822">
    <property type="entry name" value="TopoII_Trans_DNA_gyrase"/>
    <property type="match status" value="1"/>
</dbReference>
<dbReference type="FunFam" id="3.30.230.10:FF:000005">
    <property type="entry name" value="DNA gyrase subunit B"/>
    <property type="match status" value="1"/>
</dbReference>
<dbReference type="FunFam" id="3.30.565.10:FF:000002">
    <property type="entry name" value="DNA gyrase subunit B"/>
    <property type="match status" value="1"/>
</dbReference>
<dbReference type="Gene3D" id="3.30.230.10">
    <property type="match status" value="1"/>
</dbReference>
<dbReference type="Gene3D" id="3.40.50.670">
    <property type="match status" value="2"/>
</dbReference>
<dbReference type="Gene3D" id="2.170.16.10">
    <property type="entry name" value="Hedgehog/Intein (Hint) domain"/>
    <property type="match status" value="1"/>
</dbReference>
<dbReference type="Gene3D" id="3.30.565.10">
    <property type="entry name" value="Histidine kinase-like ATPase, C-terminal domain"/>
    <property type="match status" value="1"/>
</dbReference>
<dbReference type="InterPro" id="IPR002288">
    <property type="entry name" value="DNA_gyrase_B_C"/>
</dbReference>
<dbReference type="InterPro" id="IPR011557">
    <property type="entry name" value="GyrB"/>
</dbReference>
<dbReference type="InterPro" id="IPR036890">
    <property type="entry name" value="HATPase_C_sf"/>
</dbReference>
<dbReference type="InterPro" id="IPR003586">
    <property type="entry name" value="Hint_dom_C"/>
</dbReference>
<dbReference type="InterPro" id="IPR003587">
    <property type="entry name" value="Hint_dom_N"/>
</dbReference>
<dbReference type="InterPro" id="IPR036844">
    <property type="entry name" value="Hint_dom_sf"/>
</dbReference>
<dbReference type="InterPro" id="IPR030934">
    <property type="entry name" value="Intein_C"/>
</dbReference>
<dbReference type="InterPro" id="IPR006141">
    <property type="entry name" value="Intein_N"/>
</dbReference>
<dbReference type="InterPro" id="IPR020568">
    <property type="entry name" value="Ribosomal_Su5_D2-typ_SF"/>
</dbReference>
<dbReference type="InterPro" id="IPR014721">
    <property type="entry name" value="Ribsml_uS5_D2-typ_fold_subgr"/>
</dbReference>
<dbReference type="InterPro" id="IPR001241">
    <property type="entry name" value="Topo_IIA"/>
</dbReference>
<dbReference type="InterPro" id="IPR013760">
    <property type="entry name" value="Topo_IIA-like_dom_sf"/>
</dbReference>
<dbReference type="InterPro" id="IPR000565">
    <property type="entry name" value="Topo_IIA_B"/>
</dbReference>
<dbReference type="InterPro" id="IPR013759">
    <property type="entry name" value="Topo_IIA_B_C"/>
</dbReference>
<dbReference type="InterPro" id="IPR013506">
    <property type="entry name" value="Topo_IIA_bsu_dom2"/>
</dbReference>
<dbReference type="InterPro" id="IPR018522">
    <property type="entry name" value="TopoIIA_CS"/>
</dbReference>
<dbReference type="InterPro" id="IPR006171">
    <property type="entry name" value="TOPRIM_dom"/>
</dbReference>
<dbReference type="NCBIfam" id="TIGR01059">
    <property type="entry name" value="gyrB"/>
    <property type="match status" value="1"/>
</dbReference>
<dbReference type="NCBIfam" id="TIGR01443">
    <property type="entry name" value="intein_Cterm"/>
    <property type="match status" value="1"/>
</dbReference>
<dbReference type="NCBIfam" id="TIGR01445">
    <property type="entry name" value="intein_Nterm"/>
    <property type="match status" value="1"/>
</dbReference>
<dbReference type="PANTHER" id="PTHR45866:SF1">
    <property type="entry name" value="DNA GYRASE SUBUNIT B, MITOCHONDRIAL"/>
    <property type="match status" value="1"/>
</dbReference>
<dbReference type="PANTHER" id="PTHR45866">
    <property type="entry name" value="DNA GYRASE/TOPOISOMERASE SUBUNIT B"/>
    <property type="match status" value="1"/>
</dbReference>
<dbReference type="Pfam" id="PF00204">
    <property type="entry name" value="DNA_gyraseB"/>
    <property type="match status" value="1"/>
</dbReference>
<dbReference type="Pfam" id="PF00986">
    <property type="entry name" value="DNA_gyraseB_C"/>
    <property type="match status" value="1"/>
</dbReference>
<dbReference type="Pfam" id="PF02518">
    <property type="entry name" value="HATPase_c"/>
    <property type="match status" value="1"/>
</dbReference>
<dbReference type="Pfam" id="PF14890">
    <property type="entry name" value="Intein_splicing"/>
    <property type="match status" value="1"/>
</dbReference>
<dbReference type="Pfam" id="PF01751">
    <property type="entry name" value="Toprim"/>
    <property type="match status" value="1"/>
</dbReference>
<dbReference type="PRINTS" id="PR01159">
    <property type="entry name" value="DNAGYRASEB"/>
</dbReference>
<dbReference type="PRINTS" id="PR00418">
    <property type="entry name" value="TPI2FAMILY"/>
</dbReference>
<dbReference type="SMART" id="SM00387">
    <property type="entry name" value="HATPase_c"/>
    <property type="match status" value="1"/>
</dbReference>
<dbReference type="SMART" id="SM00305">
    <property type="entry name" value="HintC"/>
    <property type="match status" value="1"/>
</dbReference>
<dbReference type="SMART" id="SM00306">
    <property type="entry name" value="HintN"/>
    <property type="match status" value="1"/>
</dbReference>
<dbReference type="SMART" id="SM00433">
    <property type="entry name" value="TOP2c"/>
    <property type="match status" value="1"/>
</dbReference>
<dbReference type="SUPFAM" id="SSF55874">
    <property type="entry name" value="ATPase domain of HSP90 chaperone/DNA topoisomerase II/histidine kinase"/>
    <property type="match status" value="1"/>
</dbReference>
<dbReference type="SUPFAM" id="SSF51294">
    <property type="entry name" value="Hedgehog/intein (Hint) domain"/>
    <property type="match status" value="1"/>
</dbReference>
<dbReference type="SUPFAM" id="SSF54211">
    <property type="entry name" value="Ribosomal protein S5 domain 2-like"/>
    <property type="match status" value="1"/>
</dbReference>
<dbReference type="SUPFAM" id="SSF56719">
    <property type="entry name" value="Type II DNA topoisomerase"/>
    <property type="match status" value="2"/>
</dbReference>
<dbReference type="PROSITE" id="PS50818">
    <property type="entry name" value="INTEIN_C_TER"/>
    <property type="match status" value="1"/>
</dbReference>
<dbReference type="PROSITE" id="PS50817">
    <property type="entry name" value="INTEIN_N_TER"/>
    <property type="match status" value="1"/>
</dbReference>
<dbReference type="PROSITE" id="PS00177">
    <property type="entry name" value="TOPOISOMERASE_II"/>
    <property type="match status" value="1"/>
</dbReference>
<dbReference type="PROSITE" id="PS50880">
    <property type="entry name" value="TOPRIM"/>
    <property type="match status" value="1"/>
</dbReference>